<dbReference type="EMBL" id="AF097000">
    <property type="protein sequence ID" value="AAD08813.1"/>
    <property type="molecule type" value="Genomic_DNA"/>
</dbReference>
<dbReference type="EMBL" id="L42003">
    <property type="protein sequence ID" value="AAA66026.1"/>
    <property type="molecule type" value="mRNA"/>
</dbReference>
<dbReference type="SMR" id="Q9YGJ5"/>
<dbReference type="GO" id="GO:0005576">
    <property type="term" value="C:extracellular region"/>
    <property type="evidence" value="ECO:0007669"/>
    <property type="project" value="UniProtKB-SubCell"/>
</dbReference>
<dbReference type="GO" id="GO:0030550">
    <property type="term" value="F:acetylcholine receptor inhibitor activity"/>
    <property type="evidence" value="ECO:0007669"/>
    <property type="project" value="UniProtKB-KW"/>
</dbReference>
<dbReference type="GO" id="GO:0099106">
    <property type="term" value="F:ion channel regulator activity"/>
    <property type="evidence" value="ECO:0007669"/>
    <property type="project" value="UniProtKB-KW"/>
</dbReference>
<dbReference type="GO" id="GO:0090729">
    <property type="term" value="F:toxin activity"/>
    <property type="evidence" value="ECO:0007669"/>
    <property type="project" value="UniProtKB-KW"/>
</dbReference>
<dbReference type="CDD" id="cd00206">
    <property type="entry name" value="TFP_snake_toxin"/>
    <property type="match status" value="1"/>
</dbReference>
<dbReference type="FunFam" id="2.10.60.10:FF:000024">
    <property type="entry name" value="Cytotoxin 1"/>
    <property type="match status" value="1"/>
</dbReference>
<dbReference type="Gene3D" id="2.10.60.10">
    <property type="entry name" value="CD59"/>
    <property type="match status" value="1"/>
</dbReference>
<dbReference type="InterPro" id="IPR003571">
    <property type="entry name" value="Snake_3FTx"/>
</dbReference>
<dbReference type="InterPro" id="IPR045860">
    <property type="entry name" value="Snake_toxin-like_sf"/>
</dbReference>
<dbReference type="InterPro" id="IPR018354">
    <property type="entry name" value="Snake_toxin_con_site"/>
</dbReference>
<dbReference type="InterPro" id="IPR054131">
    <property type="entry name" value="Toxin_cobra-type"/>
</dbReference>
<dbReference type="Pfam" id="PF21947">
    <property type="entry name" value="Toxin_cobra-type"/>
    <property type="match status" value="1"/>
</dbReference>
<dbReference type="SUPFAM" id="SSF57302">
    <property type="entry name" value="Snake toxin-like"/>
    <property type="match status" value="1"/>
</dbReference>
<dbReference type="PROSITE" id="PS00272">
    <property type="entry name" value="SNAKE_TOXIN"/>
    <property type="match status" value="1"/>
</dbReference>
<evidence type="ECO:0000250" key="1"/>
<evidence type="ECO:0000250" key="2">
    <source>
        <dbReference type="UniProtKB" id="P0C1Z0"/>
    </source>
</evidence>
<evidence type="ECO:0000250" key="3">
    <source>
        <dbReference type="UniProtKB" id="P60775"/>
    </source>
</evidence>
<evidence type="ECO:0000305" key="4"/>
<comment type="function">
    <text evidence="3">Binds to muscle nicotinic acetylcholine receptor (nAChR) and inhibit acetylcholine from binding to the receptor, thereby impairing neuromuscular transmission.</text>
</comment>
<comment type="subcellular location">
    <subcellularLocation>
        <location evidence="1">Secreted</location>
    </subcellularLocation>
</comment>
<comment type="tissue specificity">
    <text evidence="4">Expressed by the venom gland.</text>
</comment>
<comment type="similarity">
    <text evidence="4">Belongs to the three-finger toxin family. Short-chain subfamily. Type I alpha-neurotoxin sub-subfamily.</text>
</comment>
<accession>Q9YGJ5</accession>
<accession>Q91139</accession>
<organism>
    <name type="scientific">Naja sputatrix</name>
    <name type="common">Malayan spitting cobra</name>
    <name type="synonym">Naja naja sputatrix</name>
    <dbReference type="NCBI Taxonomy" id="33626"/>
    <lineage>
        <taxon>Eukaryota</taxon>
        <taxon>Metazoa</taxon>
        <taxon>Chordata</taxon>
        <taxon>Craniata</taxon>
        <taxon>Vertebrata</taxon>
        <taxon>Euteleostomi</taxon>
        <taxon>Lepidosauria</taxon>
        <taxon>Squamata</taxon>
        <taxon>Bifurcata</taxon>
        <taxon>Unidentata</taxon>
        <taxon>Episquamata</taxon>
        <taxon>Toxicofera</taxon>
        <taxon>Serpentes</taxon>
        <taxon>Colubroidea</taxon>
        <taxon>Elapidae</taxon>
        <taxon>Elapinae</taxon>
        <taxon>Naja</taxon>
    </lineage>
</organism>
<keyword id="KW-0008">Acetylcholine receptor inhibiting toxin</keyword>
<keyword id="KW-1015">Disulfide bond</keyword>
<keyword id="KW-0872">Ion channel impairing toxin</keyword>
<keyword id="KW-0528">Neurotoxin</keyword>
<keyword id="KW-0629">Postsynaptic neurotoxin</keyword>
<keyword id="KW-0964">Secreted</keyword>
<keyword id="KW-0732">Signal</keyword>
<keyword id="KW-0800">Toxin</keyword>
<proteinExistence type="inferred from homology"/>
<name>3S1A2_NAJSP</name>
<feature type="signal peptide" evidence="1">
    <location>
        <begin position="1"/>
        <end position="21"/>
    </location>
</feature>
<feature type="chain" id="PRO_0000035458" description="Alpha-neurotoxin NTX-2">
    <location>
        <begin position="22"/>
        <end position="83"/>
    </location>
</feature>
<feature type="disulfide bond" evidence="2">
    <location>
        <begin position="24"/>
        <end position="45"/>
    </location>
</feature>
<feature type="disulfide bond" evidence="2">
    <location>
        <begin position="38"/>
        <end position="62"/>
    </location>
</feature>
<feature type="disulfide bond" evidence="2">
    <location>
        <begin position="64"/>
        <end position="75"/>
    </location>
</feature>
<feature type="disulfide bond" evidence="2">
    <location>
        <begin position="76"/>
        <end position="81"/>
    </location>
</feature>
<feature type="sequence conflict" description="In Ref. 2; AAA66026." evidence="4" ref="2">
    <original>N</original>
    <variation>D</variation>
    <location>
        <position position="26"/>
    </location>
</feature>
<protein>
    <recommendedName>
        <fullName>Alpha-neurotoxin NTX-2</fullName>
        <shortName>NTX2</shortName>
    </recommendedName>
</protein>
<reference key="1">
    <citation type="journal article" date="1999" name="Genome Res.">
        <title>Postsynaptic alpha-neurotoxin gene of the spitting cobra, Naja naja sputatrix: structure, organization, and phylogenetic analysis.</title>
        <authorList>
            <person name="Afifiyan F."/>
            <person name="Armugam A."/>
            <person name="Tan C.H."/>
            <person name="Gopalakrishnakone P."/>
            <person name="Jeyaseelan K."/>
        </authorList>
    </citation>
    <scope>NUCLEOTIDE SEQUENCE [GENOMIC DNA]</scope>
    <source>
        <tissue>Liver</tissue>
    </source>
</reference>
<reference key="2">
    <citation type="submission" date="1995-05" db="EMBL/GenBank/DDBJ databases">
        <title>Cloning of genes encoding neurotoxin in the venom of naja naja sputatrix.</title>
        <authorList>
            <person name="Jeyaseelan K."/>
            <person name="Armugam A."/>
            <person name="Lachumanan R."/>
            <person name="Earnest L."/>
            <person name="Tan N.H."/>
            <person name="Tan C.H."/>
            <person name="Gopalakrishnakone P.P."/>
        </authorList>
    </citation>
    <scope>NUCLEOTIDE SEQUENCE [MRNA] OF 22-83</scope>
    <source>
        <tissue>Venom gland</tissue>
    </source>
</reference>
<sequence length="83" mass="9189">MKTLLLTLLVVTIVCLDLGYTLECHNQQSSQAPTTTGCSGGETNCYKKSWRDHRGYRIERGCGCPSVKKGIEINCCTTDRCNN</sequence>